<feature type="chain" id="PRO_0000239884" description="Urease subunit alpha">
    <location>
        <begin position="1"/>
        <end position="570"/>
    </location>
</feature>
<feature type="domain" description="Urease" evidence="1">
    <location>
        <begin position="131"/>
        <end position="570"/>
    </location>
</feature>
<feature type="active site" description="Proton donor" evidence="1">
    <location>
        <position position="322"/>
    </location>
</feature>
<feature type="binding site" evidence="1">
    <location>
        <position position="136"/>
    </location>
    <ligand>
        <name>Ni(2+)</name>
        <dbReference type="ChEBI" id="CHEBI:49786"/>
        <label>1</label>
    </ligand>
</feature>
<feature type="binding site" evidence="1">
    <location>
        <position position="138"/>
    </location>
    <ligand>
        <name>Ni(2+)</name>
        <dbReference type="ChEBI" id="CHEBI:49786"/>
        <label>1</label>
    </ligand>
</feature>
<feature type="binding site" description="via carbamate group" evidence="1">
    <location>
        <position position="219"/>
    </location>
    <ligand>
        <name>Ni(2+)</name>
        <dbReference type="ChEBI" id="CHEBI:49786"/>
        <label>1</label>
    </ligand>
</feature>
<feature type="binding site" description="via carbamate group" evidence="1">
    <location>
        <position position="219"/>
    </location>
    <ligand>
        <name>Ni(2+)</name>
        <dbReference type="ChEBI" id="CHEBI:49786"/>
        <label>2</label>
    </ligand>
</feature>
<feature type="binding site" evidence="1">
    <location>
        <position position="221"/>
    </location>
    <ligand>
        <name>substrate</name>
    </ligand>
</feature>
<feature type="binding site" evidence="1">
    <location>
        <position position="248"/>
    </location>
    <ligand>
        <name>Ni(2+)</name>
        <dbReference type="ChEBI" id="CHEBI:49786"/>
        <label>2</label>
    </ligand>
</feature>
<feature type="binding site" evidence="1">
    <location>
        <position position="274"/>
    </location>
    <ligand>
        <name>Ni(2+)</name>
        <dbReference type="ChEBI" id="CHEBI:49786"/>
        <label>2</label>
    </ligand>
</feature>
<feature type="binding site" evidence="1">
    <location>
        <position position="362"/>
    </location>
    <ligand>
        <name>Ni(2+)</name>
        <dbReference type="ChEBI" id="CHEBI:49786"/>
        <label>1</label>
    </ligand>
</feature>
<feature type="modified residue" description="N6-carboxylysine" evidence="1">
    <location>
        <position position="219"/>
    </location>
</feature>
<evidence type="ECO:0000255" key="1">
    <source>
        <dbReference type="HAMAP-Rule" id="MF_01953"/>
    </source>
</evidence>
<keyword id="KW-0963">Cytoplasm</keyword>
<keyword id="KW-0378">Hydrolase</keyword>
<keyword id="KW-0479">Metal-binding</keyword>
<keyword id="KW-0533">Nickel</keyword>
<sequence>MSVKIPRSVYADMFGPTTGDRVRLADTDLIIEVEKDFTIYGEEVKFGGGKVIRDGMGQSQVTNAQGAADTVITNALIVDHWGIVKADVALKDGYIAAIGKAGNPDIQPGVTIIIGPGTDIIAGEGKILTAGGFDSHIHFICPQQIEHALMSGVTSMLGGGTGPSHGTFATTCTPGPWHLGRMIQSFDAFPVNLGLAGKGNASQPAALKEMIEAGACALKLHEDWGTTPAAIDNCLTVADDYDVQVMIHSDTLNESGFVEDTIKAFKGRTIHAFHTEGAGGGHAPDIIKVAGLPNVLPSSTNPTRPFTKNTIDEHLDMLMVCHHLDPSIAEDLAFAESRIRKETIAAEDILHDLGALSMMSSDSQAMGRLGEVIIRTWQTADKMKKQRGSLPQDSARNDNFRVKRYIAKYTINPAIAHGVARLIGSIEQGKLADLVLWSPAFFGVKPDLIIKGGSIVAAPMGDPNASIPTPQPVHYQPMFAAYGRSLFASSVVFTSQAAVAEGLAKKLGIQKSLYGVENTRSGISKKSMIHNDATPNIEVDPETYEVRADGELLTCAPAEVLPMAQRYFMY</sequence>
<name>URE1_RHOPB</name>
<dbReference type="EC" id="3.5.1.5" evidence="1"/>
<dbReference type="EMBL" id="CP000301">
    <property type="protein sequence ID" value="ABD89227.1"/>
    <property type="molecule type" value="Genomic_DNA"/>
</dbReference>
<dbReference type="SMR" id="Q210F9"/>
<dbReference type="STRING" id="316056.RPC_3692"/>
<dbReference type="MEROPS" id="M38.982"/>
<dbReference type="KEGG" id="rpc:RPC_3692"/>
<dbReference type="eggNOG" id="COG0804">
    <property type="taxonomic scope" value="Bacteria"/>
</dbReference>
<dbReference type="HOGENOM" id="CLU_000980_0_0_5"/>
<dbReference type="OrthoDB" id="9802793at2"/>
<dbReference type="UniPathway" id="UPA00258">
    <property type="reaction ID" value="UER00370"/>
</dbReference>
<dbReference type="GO" id="GO:0005737">
    <property type="term" value="C:cytoplasm"/>
    <property type="evidence" value="ECO:0007669"/>
    <property type="project" value="UniProtKB-SubCell"/>
</dbReference>
<dbReference type="GO" id="GO:0016151">
    <property type="term" value="F:nickel cation binding"/>
    <property type="evidence" value="ECO:0007669"/>
    <property type="project" value="UniProtKB-UniRule"/>
</dbReference>
<dbReference type="GO" id="GO:0009039">
    <property type="term" value="F:urease activity"/>
    <property type="evidence" value="ECO:0007669"/>
    <property type="project" value="UniProtKB-UniRule"/>
</dbReference>
<dbReference type="GO" id="GO:0043419">
    <property type="term" value="P:urea catabolic process"/>
    <property type="evidence" value="ECO:0007669"/>
    <property type="project" value="UniProtKB-UniRule"/>
</dbReference>
<dbReference type="CDD" id="cd00375">
    <property type="entry name" value="Urease_alpha"/>
    <property type="match status" value="1"/>
</dbReference>
<dbReference type="Gene3D" id="3.20.20.140">
    <property type="entry name" value="Metal-dependent hydrolases"/>
    <property type="match status" value="1"/>
</dbReference>
<dbReference type="Gene3D" id="2.30.40.10">
    <property type="entry name" value="Urease, subunit C, domain 1"/>
    <property type="match status" value="1"/>
</dbReference>
<dbReference type="HAMAP" id="MF_01953">
    <property type="entry name" value="Urease_alpha"/>
    <property type="match status" value="1"/>
</dbReference>
<dbReference type="InterPro" id="IPR006680">
    <property type="entry name" value="Amidohydro-rel"/>
</dbReference>
<dbReference type="InterPro" id="IPR011059">
    <property type="entry name" value="Metal-dep_hydrolase_composite"/>
</dbReference>
<dbReference type="InterPro" id="IPR032466">
    <property type="entry name" value="Metal_Hydrolase"/>
</dbReference>
<dbReference type="InterPro" id="IPR011612">
    <property type="entry name" value="Urease_alpha_N_dom"/>
</dbReference>
<dbReference type="InterPro" id="IPR050112">
    <property type="entry name" value="Urease_alpha_subunit"/>
</dbReference>
<dbReference type="InterPro" id="IPR017950">
    <property type="entry name" value="Urease_AS"/>
</dbReference>
<dbReference type="InterPro" id="IPR005848">
    <property type="entry name" value="Urease_asu"/>
</dbReference>
<dbReference type="InterPro" id="IPR017951">
    <property type="entry name" value="Urease_asu_c"/>
</dbReference>
<dbReference type="InterPro" id="IPR029754">
    <property type="entry name" value="Urease_Ni-bd"/>
</dbReference>
<dbReference type="NCBIfam" id="NF009685">
    <property type="entry name" value="PRK13206.1"/>
    <property type="match status" value="1"/>
</dbReference>
<dbReference type="NCBIfam" id="NF009686">
    <property type="entry name" value="PRK13207.1"/>
    <property type="match status" value="1"/>
</dbReference>
<dbReference type="NCBIfam" id="TIGR01792">
    <property type="entry name" value="urease_alph"/>
    <property type="match status" value="1"/>
</dbReference>
<dbReference type="PANTHER" id="PTHR43440">
    <property type="entry name" value="UREASE"/>
    <property type="match status" value="1"/>
</dbReference>
<dbReference type="PANTHER" id="PTHR43440:SF1">
    <property type="entry name" value="UREASE"/>
    <property type="match status" value="1"/>
</dbReference>
<dbReference type="Pfam" id="PF01979">
    <property type="entry name" value="Amidohydro_1"/>
    <property type="match status" value="1"/>
</dbReference>
<dbReference type="Pfam" id="PF00449">
    <property type="entry name" value="Urease_alpha"/>
    <property type="match status" value="1"/>
</dbReference>
<dbReference type="PRINTS" id="PR01752">
    <property type="entry name" value="UREASE"/>
</dbReference>
<dbReference type="SUPFAM" id="SSF51338">
    <property type="entry name" value="Composite domain of metallo-dependent hydrolases"/>
    <property type="match status" value="2"/>
</dbReference>
<dbReference type="SUPFAM" id="SSF51556">
    <property type="entry name" value="Metallo-dependent hydrolases"/>
    <property type="match status" value="1"/>
</dbReference>
<dbReference type="PROSITE" id="PS01120">
    <property type="entry name" value="UREASE_1"/>
    <property type="match status" value="1"/>
</dbReference>
<dbReference type="PROSITE" id="PS00145">
    <property type="entry name" value="UREASE_2"/>
    <property type="match status" value="1"/>
</dbReference>
<dbReference type="PROSITE" id="PS51368">
    <property type="entry name" value="UREASE_3"/>
    <property type="match status" value="1"/>
</dbReference>
<protein>
    <recommendedName>
        <fullName evidence="1">Urease subunit alpha</fullName>
        <ecNumber evidence="1">3.5.1.5</ecNumber>
    </recommendedName>
    <alternativeName>
        <fullName evidence="1">Urea amidohydrolase subunit alpha</fullName>
    </alternativeName>
</protein>
<accession>Q210F9</accession>
<proteinExistence type="inferred from homology"/>
<organism>
    <name type="scientific">Rhodopseudomonas palustris (strain BisB18)</name>
    <dbReference type="NCBI Taxonomy" id="316056"/>
    <lineage>
        <taxon>Bacteria</taxon>
        <taxon>Pseudomonadati</taxon>
        <taxon>Pseudomonadota</taxon>
        <taxon>Alphaproteobacteria</taxon>
        <taxon>Hyphomicrobiales</taxon>
        <taxon>Nitrobacteraceae</taxon>
        <taxon>Rhodopseudomonas</taxon>
    </lineage>
</organism>
<comment type="catalytic activity">
    <reaction evidence="1">
        <text>urea + 2 H2O + H(+) = hydrogencarbonate + 2 NH4(+)</text>
        <dbReference type="Rhea" id="RHEA:20557"/>
        <dbReference type="ChEBI" id="CHEBI:15377"/>
        <dbReference type="ChEBI" id="CHEBI:15378"/>
        <dbReference type="ChEBI" id="CHEBI:16199"/>
        <dbReference type="ChEBI" id="CHEBI:17544"/>
        <dbReference type="ChEBI" id="CHEBI:28938"/>
        <dbReference type="EC" id="3.5.1.5"/>
    </reaction>
</comment>
<comment type="cofactor">
    <cofactor evidence="1">
        <name>Ni cation</name>
        <dbReference type="ChEBI" id="CHEBI:25516"/>
    </cofactor>
    <text evidence="1">Binds 2 nickel ions per subunit.</text>
</comment>
<comment type="pathway">
    <text evidence="1">Nitrogen metabolism; urea degradation; CO(2) and NH(3) from urea (urease route): step 1/1.</text>
</comment>
<comment type="subunit">
    <text evidence="1">Heterotrimer of UreA (gamma), UreB (beta) and UreC (alpha) subunits. Three heterotrimers associate to form the active enzyme.</text>
</comment>
<comment type="subcellular location">
    <subcellularLocation>
        <location evidence="1">Cytoplasm</location>
    </subcellularLocation>
</comment>
<comment type="PTM">
    <text evidence="1">Carboxylation allows a single lysine to coordinate two nickel ions.</text>
</comment>
<comment type="similarity">
    <text evidence="1">Belongs to the metallo-dependent hydrolases superfamily. Urease alpha subunit family.</text>
</comment>
<reference key="1">
    <citation type="submission" date="2006-03" db="EMBL/GenBank/DDBJ databases">
        <title>Complete sequence of Rhodopseudomonas palustris BisB18.</title>
        <authorList>
            <consortium name="US DOE Joint Genome Institute"/>
            <person name="Copeland A."/>
            <person name="Lucas S."/>
            <person name="Lapidus A."/>
            <person name="Barry K."/>
            <person name="Detter J.C."/>
            <person name="Glavina del Rio T."/>
            <person name="Hammon N."/>
            <person name="Israni S."/>
            <person name="Dalin E."/>
            <person name="Tice H."/>
            <person name="Pitluck S."/>
            <person name="Chain P."/>
            <person name="Malfatti S."/>
            <person name="Shin M."/>
            <person name="Vergez L."/>
            <person name="Schmutz J."/>
            <person name="Larimer F."/>
            <person name="Land M."/>
            <person name="Hauser L."/>
            <person name="Pelletier D.A."/>
            <person name="Kyrpides N."/>
            <person name="Anderson I."/>
            <person name="Oda Y."/>
            <person name="Harwood C.S."/>
            <person name="Richardson P."/>
        </authorList>
    </citation>
    <scope>NUCLEOTIDE SEQUENCE [LARGE SCALE GENOMIC DNA]</scope>
    <source>
        <strain>BisB18</strain>
    </source>
</reference>
<gene>
    <name evidence="1" type="primary">ureC</name>
    <name type="ordered locus">RPC_3692</name>
</gene>